<reference key="1">
    <citation type="submission" date="2008-02" db="EMBL/GenBank/DDBJ databases">
        <title>Complete sequence of Escherichia coli C str. ATCC 8739.</title>
        <authorList>
            <person name="Copeland A."/>
            <person name="Lucas S."/>
            <person name="Lapidus A."/>
            <person name="Glavina del Rio T."/>
            <person name="Dalin E."/>
            <person name="Tice H."/>
            <person name="Bruce D."/>
            <person name="Goodwin L."/>
            <person name="Pitluck S."/>
            <person name="Kiss H."/>
            <person name="Brettin T."/>
            <person name="Detter J.C."/>
            <person name="Han C."/>
            <person name="Kuske C.R."/>
            <person name="Schmutz J."/>
            <person name="Larimer F."/>
            <person name="Land M."/>
            <person name="Hauser L."/>
            <person name="Kyrpides N."/>
            <person name="Mikhailova N."/>
            <person name="Ingram L."/>
            <person name="Richardson P."/>
        </authorList>
    </citation>
    <scope>NUCLEOTIDE SEQUENCE [LARGE SCALE GENOMIC DNA]</scope>
    <source>
        <strain>ATCC 8739 / DSM 1576 / NBRC 3972 / NCIMB 8545 / WDCM 00012 / Crooks</strain>
    </source>
</reference>
<keyword id="KW-0255">Endonuclease</keyword>
<keyword id="KW-0269">Exonuclease</keyword>
<keyword id="KW-0378">Hydrolase</keyword>
<keyword id="KW-0479">Metal-binding</keyword>
<keyword id="KW-0540">Nuclease</keyword>
<keyword id="KW-0819">tRNA processing</keyword>
<keyword id="KW-0862">Zinc</keyword>
<proteinExistence type="inferred from homology"/>
<organism>
    <name type="scientific">Escherichia coli (strain ATCC 8739 / DSM 1576 / NBRC 3972 / NCIMB 8545 / WDCM 00012 / Crooks)</name>
    <dbReference type="NCBI Taxonomy" id="481805"/>
    <lineage>
        <taxon>Bacteria</taxon>
        <taxon>Pseudomonadati</taxon>
        <taxon>Pseudomonadota</taxon>
        <taxon>Gammaproteobacteria</taxon>
        <taxon>Enterobacterales</taxon>
        <taxon>Enterobacteriaceae</taxon>
        <taxon>Escherichia</taxon>
    </lineage>
</organism>
<sequence length="305" mass="32930">MELIFLGTSAGVPTRTRNVTAILLNLQHPTQSGLWLFDCGEGTQHQLLHTAFNPGKLDKIFISHLHGDHLFGLPGLLCSRSMSGIIQPLTIYGPQGIREFVETALRISGSWTDYPLEIVEIGAGEILDDGLRKVTAYPLEHPLECYGYRIEEHDKPGALNAQALKAAGVPPGPLFQELKAGKTITLEDGRQINGADYLAAPVPGKALAIFGDTGPCDAALDLAKGVDVMVHEATLDITMEAKANSRGHSSTRQAATLAREAGVGKLIITHVSSRYDDKGCQHLLRECRSIFPATELANDFTVFNV</sequence>
<accession>B1IXR8</accession>
<gene>
    <name evidence="1" type="primary">rbn</name>
    <name type="synonym">rnz</name>
    <name type="ordered locus">EcolC_1380</name>
</gene>
<feature type="chain" id="PRO_1000088335" description="Ribonuclease BN">
    <location>
        <begin position="1"/>
        <end position="305"/>
    </location>
</feature>
<feature type="active site" description="Proton acceptor" evidence="1">
    <location>
        <position position="68"/>
    </location>
</feature>
<feature type="binding site" evidence="1">
    <location>
        <position position="64"/>
    </location>
    <ligand>
        <name>Zn(2+)</name>
        <dbReference type="ChEBI" id="CHEBI:29105"/>
        <label>1</label>
        <note>catalytic</note>
    </ligand>
</feature>
<feature type="binding site" evidence="1">
    <location>
        <position position="66"/>
    </location>
    <ligand>
        <name>Zn(2+)</name>
        <dbReference type="ChEBI" id="CHEBI:29105"/>
        <label>1</label>
        <note>catalytic</note>
    </ligand>
</feature>
<feature type="binding site" evidence="1">
    <location>
        <position position="68"/>
    </location>
    <ligand>
        <name>Zn(2+)</name>
        <dbReference type="ChEBI" id="CHEBI:29105"/>
        <label>2</label>
        <note>catalytic</note>
    </ligand>
</feature>
<feature type="binding site" evidence="1">
    <location>
        <position position="69"/>
    </location>
    <ligand>
        <name>Zn(2+)</name>
        <dbReference type="ChEBI" id="CHEBI:29105"/>
        <label>2</label>
        <note>catalytic</note>
    </ligand>
</feature>
<feature type="binding site" evidence="1">
    <location>
        <position position="141"/>
    </location>
    <ligand>
        <name>Zn(2+)</name>
        <dbReference type="ChEBI" id="CHEBI:29105"/>
        <label>1</label>
        <note>catalytic</note>
    </ligand>
</feature>
<feature type="binding site" evidence="1">
    <location>
        <position position="212"/>
    </location>
    <ligand>
        <name>Zn(2+)</name>
        <dbReference type="ChEBI" id="CHEBI:29105"/>
        <label>1</label>
        <note>catalytic</note>
    </ligand>
</feature>
<feature type="binding site" evidence="1">
    <location>
        <position position="212"/>
    </location>
    <ligand>
        <name>Zn(2+)</name>
        <dbReference type="ChEBI" id="CHEBI:29105"/>
        <label>2</label>
        <note>catalytic</note>
    </ligand>
</feature>
<feature type="binding site" evidence="1">
    <location>
        <position position="270"/>
    </location>
    <ligand>
        <name>Zn(2+)</name>
        <dbReference type="ChEBI" id="CHEBI:29105"/>
        <label>2</label>
        <note>catalytic</note>
    </ligand>
</feature>
<evidence type="ECO:0000255" key="1">
    <source>
        <dbReference type="HAMAP-Rule" id="MF_01818"/>
    </source>
</evidence>
<dbReference type="EC" id="3.1.-.-" evidence="1"/>
<dbReference type="EMBL" id="CP000946">
    <property type="protein sequence ID" value="ACA77044.1"/>
    <property type="molecule type" value="Genomic_DNA"/>
</dbReference>
<dbReference type="RefSeq" id="WP_001300687.1">
    <property type="nucleotide sequence ID" value="NZ_MTFT01000028.1"/>
</dbReference>
<dbReference type="SMR" id="B1IXR8"/>
<dbReference type="KEGG" id="ecl:EcolC_1380"/>
<dbReference type="HOGENOM" id="CLU_031317_2_0_6"/>
<dbReference type="GO" id="GO:0042781">
    <property type="term" value="F:3'-tRNA processing endoribonuclease activity"/>
    <property type="evidence" value="ECO:0007669"/>
    <property type="project" value="TreeGrafter"/>
</dbReference>
<dbReference type="GO" id="GO:0004527">
    <property type="term" value="F:exonuclease activity"/>
    <property type="evidence" value="ECO:0007669"/>
    <property type="project" value="UniProtKB-UniRule"/>
</dbReference>
<dbReference type="GO" id="GO:0008270">
    <property type="term" value="F:zinc ion binding"/>
    <property type="evidence" value="ECO:0007669"/>
    <property type="project" value="UniProtKB-UniRule"/>
</dbReference>
<dbReference type="CDD" id="cd07717">
    <property type="entry name" value="RNaseZ_ZiPD-like_MBL-fold"/>
    <property type="match status" value="1"/>
</dbReference>
<dbReference type="FunFam" id="3.60.15.10:FF:000002">
    <property type="entry name" value="Ribonuclease Z"/>
    <property type="match status" value="1"/>
</dbReference>
<dbReference type="Gene3D" id="3.60.15.10">
    <property type="entry name" value="Ribonuclease Z/Hydroxyacylglutathione hydrolase-like"/>
    <property type="match status" value="1"/>
</dbReference>
<dbReference type="HAMAP" id="MF_01818">
    <property type="entry name" value="RNase_Z_BN"/>
    <property type="match status" value="1"/>
</dbReference>
<dbReference type="InterPro" id="IPR001279">
    <property type="entry name" value="Metallo-B-lactamas"/>
</dbReference>
<dbReference type="InterPro" id="IPR036866">
    <property type="entry name" value="RibonucZ/Hydroxyglut_hydro"/>
</dbReference>
<dbReference type="InterPro" id="IPR013469">
    <property type="entry name" value="Rnase_BN"/>
</dbReference>
<dbReference type="InterPro" id="IPR013471">
    <property type="entry name" value="RNase_Z/BN"/>
</dbReference>
<dbReference type="NCBIfam" id="NF000800">
    <property type="entry name" value="PRK00055.1-1"/>
    <property type="match status" value="1"/>
</dbReference>
<dbReference type="NCBIfam" id="NF000801">
    <property type="entry name" value="PRK00055.1-3"/>
    <property type="match status" value="1"/>
</dbReference>
<dbReference type="NCBIfam" id="TIGR02651">
    <property type="entry name" value="RNase_Z"/>
    <property type="match status" value="1"/>
</dbReference>
<dbReference type="NCBIfam" id="TIGR02649">
    <property type="entry name" value="true_RNase_BN"/>
    <property type="match status" value="1"/>
</dbReference>
<dbReference type="PANTHER" id="PTHR46018">
    <property type="entry name" value="ZINC PHOSPHODIESTERASE ELAC PROTEIN 1"/>
    <property type="match status" value="1"/>
</dbReference>
<dbReference type="PANTHER" id="PTHR46018:SF2">
    <property type="entry name" value="ZINC PHOSPHODIESTERASE ELAC PROTEIN 1"/>
    <property type="match status" value="1"/>
</dbReference>
<dbReference type="Pfam" id="PF12706">
    <property type="entry name" value="Lactamase_B_2"/>
    <property type="match status" value="1"/>
</dbReference>
<dbReference type="SMART" id="SM00849">
    <property type="entry name" value="Lactamase_B"/>
    <property type="match status" value="1"/>
</dbReference>
<dbReference type="SUPFAM" id="SSF56281">
    <property type="entry name" value="Metallo-hydrolase/oxidoreductase"/>
    <property type="match status" value="1"/>
</dbReference>
<name>RBN_ECOLC</name>
<comment type="function">
    <text evidence="1">Zinc phosphodiesterase, which has both exoribonuclease and endoribonuclease activities.</text>
</comment>
<comment type="cofactor">
    <cofactor evidence="1">
        <name>Zn(2+)</name>
        <dbReference type="ChEBI" id="CHEBI:29105"/>
    </cofactor>
    <text evidence="1">Binds 2 Zn(2+) ions.</text>
</comment>
<comment type="subunit">
    <text evidence="1">Homodimer.</text>
</comment>
<comment type="similarity">
    <text evidence="1">Belongs to the RNase Z family. RNase BN subfamily.</text>
</comment>
<protein>
    <recommendedName>
        <fullName evidence="1">Ribonuclease BN</fullName>
        <shortName evidence="1">RNase BN</shortName>
        <ecNumber evidence="1">3.1.-.-</ecNumber>
    </recommendedName>
    <alternativeName>
        <fullName evidence="1">Ribonuclease Z homolog</fullName>
        <shortName evidence="1">RNase Z homolog</shortName>
    </alternativeName>
</protein>